<proteinExistence type="inferred from homology"/>
<reference key="1">
    <citation type="journal article" date="2002" name="Nature">
        <title>The genome sequence of Schizosaccharomyces pombe.</title>
        <authorList>
            <person name="Wood V."/>
            <person name="Gwilliam R."/>
            <person name="Rajandream M.A."/>
            <person name="Lyne M.H."/>
            <person name="Lyne R."/>
            <person name="Stewart A."/>
            <person name="Sgouros J.G."/>
            <person name="Peat N."/>
            <person name="Hayles J."/>
            <person name="Baker S.G."/>
            <person name="Basham D."/>
            <person name="Bowman S."/>
            <person name="Brooks K."/>
            <person name="Brown D."/>
            <person name="Brown S."/>
            <person name="Chillingworth T."/>
            <person name="Churcher C.M."/>
            <person name="Collins M."/>
            <person name="Connor R."/>
            <person name="Cronin A."/>
            <person name="Davis P."/>
            <person name="Feltwell T."/>
            <person name="Fraser A."/>
            <person name="Gentles S."/>
            <person name="Goble A."/>
            <person name="Hamlin N."/>
            <person name="Harris D.E."/>
            <person name="Hidalgo J."/>
            <person name="Hodgson G."/>
            <person name="Holroyd S."/>
            <person name="Hornsby T."/>
            <person name="Howarth S."/>
            <person name="Huckle E.J."/>
            <person name="Hunt S."/>
            <person name="Jagels K."/>
            <person name="James K.D."/>
            <person name="Jones L."/>
            <person name="Jones M."/>
            <person name="Leather S."/>
            <person name="McDonald S."/>
            <person name="McLean J."/>
            <person name="Mooney P."/>
            <person name="Moule S."/>
            <person name="Mungall K.L."/>
            <person name="Murphy L.D."/>
            <person name="Niblett D."/>
            <person name="Odell C."/>
            <person name="Oliver K."/>
            <person name="O'Neil S."/>
            <person name="Pearson D."/>
            <person name="Quail M.A."/>
            <person name="Rabbinowitsch E."/>
            <person name="Rutherford K.M."/>
            <person name="Rutter S."/>
            <person name="Saunders D."/>
            <person name="Seeger K."/>
            <person name="Sharp S."/>
            <person name="Skelton J."/>
            <person name="Simmonds M.N."/>
            <person name="Squares R."/>
            <person name="Squares S."/>
            <person name="Stevens K."/>
            <person name="Taylor K."/>
            <person name="Taylor R.G."/>
            <person name="Tivey A."/>
            <person name="Walsh S.V."/>
            <person name="Warren T."/>
            <person name="Whitehead S."/>
            <person name="Woodward J.R."/>
            <person name="Volckaert G."/>
            <person name="Aert R."/>
            <person name="Robben J."/>
            <person name="Grymonprez B."/>
            <person name="Weltjens I."/>
            <person name="Vanstreels E."/>
            <person name="Rieger M."/>
            <person name="Schaefer M."/>
            <person name="Mueller-Auer S."/>
            <person name="Gabel C."/>
            <person name="Fuchs M."/>
            <person name="Duesterhoeft A."/>
            <person name="Fritzc C."/>
            <person name="Holzer E."/>
            <person name="Moestl D."/>
            <person name="Hilbert H."/>
            <person name="Borzym K."/>
            <person name="Langer I."/>
            <person name="Beck A."/>
            <person name="Lehrach H."/>
            <person name="Reinhardt R."/>
            <person name="Pohl T.M."/>
            <person name="Eger P."/>
            <person name="Zimmermann W."/>
            <person name="Wedler H."/>
            <person name="Wambutt R."/>
            <person name="Purnelle B."/>
            <person name="Goffeau A."/>
            <person name="Cadieu E."/>
            <person name="Dreano S."/>
            <person name="Gloux S."/>
            <person name="Lelaure V."/>
            <person name="Mottier S."/>
            <person name="Galibert F."/>
            <person name="Aves S.J."/>
            <person name="Xiang Z."/>
            <person name="Hunt C."/>
            <person name="Moore K."/>
            <person name="Hurst S.M."/>
            <person name="Lucas M."/>
            <person name="Rochet M."/>
            <person name="Gaillardin C."/>
            <person name="Tallada V.A."/>
            <person name="Garzon A."/>
            <person name="Thode G."/>
            <person name="Daga R.R."/>
            <person name="Cruzado L."/>
            <person name="Jimenez J."/>
            <person name="Sanchez M."/>
            <person name="del Rey F."/>
            <person name="Benito J."/>
            <person name="Dominguez A."/>
            <person name="Revuelta J.L."/>
            <person name="Moreno S."/>
            <person name="Armstrong J."/>
            <person name="Forsburg S.L."/>
            <person name="Cerutti L."/>
            <person name="Lowe T."/>
            <person name="McCombie W.R."/>
            <person name="Paulsen I."/>
            <person name="Potashkin J."/>
            <person name="Shpakovski G.V."/>
            <person name="Ussery D."/>
            <person name="Barrell B.G."/>
            <person name="Nurse P."/>
        </authorList>
    </citation>
    <scope>NUCLEOTIDE SEQUENCE [LARGE SCALE GENOMIC DNA]</scope>
    <source>
        <strain>972 / ATCC 24843</strain>
    </source>
</reference>
<reference key="2">
    <citation type="journal article" date="2011" name="Science">
        <title>Comparative functional genomics of the fission yeasts.</title>
        <authorList>
            <person name="Rhind N."/>
            <person name="Chen Z."/>
            <person name="Yassour M."/>
            <person name="Thompson D.A."/>
            <person name="Haas B.J."/>
            <person name="Habib N."/>
            <person name="Wapinski I."/>
            <person name="Roy S."/>
            <person name="Lin M.F."/>
            <person name="Heiman D.I."/>
            <person name="Young S.K."/>
            <person name="Furuya K."/>
            <person name="Guo Y."/>
            <person name="Pidoux A."/>
            <person name="Chen H.M."/>
            <person name="Robbertse B."/>
            <person name="Goldberg J.M."/>
            <person name="Aoki K."/>
            <person name="Bayne E.H."/>
            <person name="Berlin A.M."/>
            <person name="Desjardins C.A."/>
            <person name="Dobbs E."/>
            <person name="Dukaj L."/>
            <person name="Fan L."/>
            <person name="FitzGerald M.G."/>
            <person name="French C."/>
            <person name="Gujja S."/>
            <person name="Hansen K."/>
            <person name="Keifenheim D."/>
            <person name="Levin J.Z."/>
            <person name="Mosher R.A."/>
            <person name="Mueller C.A."/>
            <person name="Pfiffner J."/>
            <person name="Priest M."/>
            <person name="Russ C."/>
            <person name="Smialowska A."/>
            <person name="Swoboda P."/>
            <person name="Sykes S.M."/>
            <person name="Vaughn M."/>
            <person name="Vengrova S."/>
            <person name="Yoder R."/>
            <person name="Zeng Q."/>
            <person name="Allshire R."/>
            <person name="Baulcombe D."/>
            <person name="Birren B.W."/>
            <person name="Brown W."/>
            <person name="Ekwall K."/>
            <person name="Kellis M."/>
            <person name="Leatherwood J."/>
            <person name="Levin H."/>
            <person name="Margalit H."/>
            <person name="Martienssen R."/>
            <person name="Nieduszynski C.A."/>
            <person name="Spatafora J.W."/>
            <person name="Friedman N."/>
            <person name="Dalgaard J.Z."/>
            <person name="Baumann P."/>
            <person name="Niki H."/>
            <person name="Regev A."/>
            <person name="Nusbaum C."/>
        </authorList>
    </citation>
    <scope>REVISION OF GENE MODEL</scope>
</reference>
<reference key="3">
    <citation type="journal article" date="2003" name="J. Biol. Chem.">
        <title>High conservation of the Set1/Rad6 axis of histone 3 lysine 4 methylation in budding and fission yeasts.</title>
        <authorList>
            <person name="Roguev A."/>
            <person name="Schaft D."/>
            <person name="Shevchenko A."/>
            <person name="Aasland R."/>
            <person name="Shevchenko A."/>
            <person name="Stewart A.F."/>
        </authorList>
    </citation>
    <scope>FUNCTION</scope>
    <scope>COMPOSITION OF THE SET1 COMPLEX</scope>
</reference>
<reference key="4">
    <citation type="journal article" date="2004" name="Mol. Cell. Proteomics">
        <title>A comparative analysis of an orthologous proteomic environment in the yeasts Saccharomyces cerevisiae and Schizosaccharomyces pombe.</title>
        <authorList>
            <person name="Roguev A."/>
            <person name="Shevchenko A."/>
            <person name="Schaft D."/>
            <person name="Thomas H."/>
            <person name="Stewart A.F."/>
            <person name="Shevchenko A."/>
        </authorList>
    </citation>
    <scope>COMPOSITION OF THE SET1 COMPLEX</scope>
</reference>
<reference key="5">
    <citation type="journal article" date="2006" name="Nat. Biotechnol.">
        <title>ORFeome cloning and global analysis of protein localization in the fission yeast Schizosaccharomyces pombe.</title>
        <authorList>
            <person name="Matsuyama A."/>
            <person name="Arai R."/>
            <person name="Yashiroda Y."/>
            <person name="Shirai A."/>
            <person name="Kamata A."/>
            <person name="Sekido S."/>
            <person name="Kobayashi Y."/>
            <person name="Hashimoto A."/>
            <person name="Hamamoto M."/>
            <person name="Hiraoka Y."/>
            <person name="Horinouchi S."/>
            <person name="Yoshida M."/>
        </authorList>
    </citation>
    <scope>SUBCELLULAR LOCATION [LARGE SCALE ANALYSIS]</scope>
</reference>
<accession>Q10321</accession>
<accession>Q7Z989</accession>
<evidence type="ECO:0000269" key="1">
    <source>
    </source>
</evidence>
<evidence type="ECO:0000269" key="2">
    <source>
    </source>
</evidence>
<evidence type="ECO:0000305" key="3"/>
<protein>
    <recommendedName>
        <fullName>Set1 complex component shg1</fullName>
        <shortName>Set1C component shg1</shortName>
    </recommendedName>
    <alternativeName>
        <fullName>COMPASS component shg1</fullName>
    </alternativeName>
    <alternativeName>
        <fullName>Complex proteins associated with set1 protein shg1</fullName>
    </alternativeName>
</protein>
<keyword id="KW-0963">Cytoplasm</keyword>
<keyword id="KW-0539">Nucleus</keyword>
<keyword id="KW-1185">Reference proteome</keyword>
<name>SHG1_SCHPO</name>
<sequence>MDRDVTLNVDELVSKFKKEGHFDRLRKQILETVNEKESGPLLDRLKKIIDEEMVKDRTLKSKDQFRAAPLIAGAVDRSSLYEDSMEHIRSNVLSDQDLREVIYNSLEQIGIEQIEHEDEEKLLNSKTMDGRK</sequence>
<organism>
    <name type="scientific">Schizosaccharomyces pombe (strain 972 / ATCC 24843)</name>
    <name type="common">Fission yeast</name>
    <dbReference type="NCBI Taxonomy" id="284812"/>
    <lineage>
        <taxon>Eukaryota</taxon>
        <taxon>Fungi</taxon>
        <taxon>Dikarya</taxon>
        <taxon>Ascomycota</taxon>
        <taxon>Taphrinomycotina</taxon>
        <taxon>Schizosaccharomycetes</taxon>
        <taxon>Schizosaccharomycetales</taxon>
        <taxon>Schizosaccharomycetaceae</taxon>
        <taxon>Schizosaccharomyces</taxon>
    </lineage>
</organism>
<comment type="function">
    <text evidence="1">The Set1 complex specifically methylates 'Lys-4' of histone H3.</text>
</comment>
<comment type="subunit">
    <text>Component of the Set1 complex composed of ash2, sdc1, set1, shg1, spp1, swd1, swd2 and swd3.</text>
</comment>
<comment type="subcellular location">
    <subcellularLocation>
        <location evidence="2">Nucleus</location>
    </subcellularLocation>
    <subcellularLocation>
        <location evidence="2">Cytoplasm</location>
    </subcellularLocation>
</comment>
<comment type="similarity">
    <text evidence="3">Belongs to the SHG1 family.</text>
</comment>
<gene>
    <name type="primary">shg1</name>
    <name type="ORF">SPAC17G8.09</name>
</gene>
<feature type="chain" id="PRO_0000212514" description="Set1 complex component shg1">
    <location>
        <begin position="1"/>
        <end position="132"/>
    </location>
</feature>
<dbReference type="EMBL" id="CU329670">
    <property type="protein sequence ID" value="CAD99132.2"/>
    <property type="molecule type" value="Genomic_DNA"/>
</dbReference>
<dbReference type="PIR" id="T37861">
    <property type="entry name" value="T37861"/>
</dbReference>
<dbReference type="RefSeq" id="NP_001018248.2">
    <property type="nucleotide sequence ID" value="NM_001019163.2"/>
</dbReference>
<dbReference type="SMR" id="Q10321"/>
<dbReference type="BioGRID" id="280582">
    <property type="interactions" value="45"/>
</dbReference>
<dbReference type="ComplexPortal" id="CPX-10325">
    <property type="entry name" value="COMPASS complex"/>
</dbReference>
<dbReference type="STRING" id="284812.Q10321"/>
<dbReference type="PaxDb" id="4896-SPAC17G8.09.1"/>
<dbReference type="EnsemblFungi" id="SPAC17G8.09.1">
    <property type="protein sequence ID" value="SPAC17G8.09.1:pep"/>
    <property type="gene ID" value="SPAC17G8.09"/>
</dbReference>
<dbReference type="GeneID" id="3361506"/>
<dbReference type="KEGG" id="spo:3361506"/>
<dbReference type="PomBase" id="SPAC17G8.09">
    <property type="gene designation" value="shg1"/>
</dbReference>
<dbReference type="VEuPathDB" id="FungiDB:SPAC17G8.09"/>
<dbReference type="eggNOG" id="ENOG502S313">
    <property type="taxonomic scope" value="Eukaryota"/>
</dbReference>
<dbReference type="HOGENOM" id="CLU_1971787_0_0_1"/>
<dbReference type="InParanoid" id="Q10321"/>
<dbReference type="OMA" id="RFKREGH"/>
<dbReference type="PRO" id="PR:Q10321"/>
<dbReference type="Proteomes" id="UP000002485">
    <property type="component" value="Chromosome I"/>
</dbReference>
<dbReference type="GO" id="GO:0000785">
    <property type="term" value="C:chromatin"/>
    <property type="evidence" value="ECO:0000305"/>
    <property type="project" value="PomBase"/>
</dbReference>
<dbReference type="GO" id="GO:0005829">
    <property type="term" value="C:cytosol"/>
    <property type="evidence" value="ECO:0007005"/>
    <property type="project" value="PomBase"/>
</dbReference>
<dbReference type="GO" id="GO:0005634">
    <property type="term" value="C:nucleus"/>
    <property type="evidence" value="ECO:0007005"/>
    <property type="project" value="PomBase"/>
</dbReference>
<dbReference type="GO" id="GO:0048188">
    <property type="term" value="C:Set1C/COMPASS complex"/>
    <property type="evidence" value="ECO:0000314"/>
    <property type="project" value="PomBase"/>
</dbReference>
<dbReference type="GO" id="GO:0045815">
    <property type="term" value="P:transcription initiation-coupled chromatin remodeling"/>
    <property type="evidence" value="ECO:0000305"/>
    <property type="project" value="PomBase"/>
</dbReference>
<dbReference type="InterPro" id="IPR055264">
    <property type="entry name" value="BOD1/SHG1_dom"/>
</dbReference>
<dbReference type="Pfam" id="PF05205">
    <property type="entry name" value="COMPASS-Shg1"/>
    <property type="match status" value="1"/>
</dbReference>